<evidence type="ECO:0000250" key="1">
    <source>
        <dbReference type="UniProtKB" id="A2AF47"/>
    </source>
</evidence>
<evidence type="ECO:0000255" key="2">
    <source>
        <dbReference type="PROSITE-ProRule" id="PRU00145"/>
    </source>
</evidence>
<evidence type="ECO:0000255" key="3">
    <source>
        <dbReference type="PROSITE-ProRule" id="PRU00983"/>
    </source>
</evidence>
<evidence type="ECO:0000255" key="4">
    <source>
        <dbReference type="PROSITE-ProRule" id="PRU00984"/>
    </source>
</evidence>
<evidence type="ECO:0000256" key="5">
    <source>
        <dbReference type="SAM" id="MobiDB-lite"/>
    </source>
</evidence>
<evidence type="ECO:0000269" key="6">
    <source>
    </source>
</evidence>
<evidence type="ECO:0000269" key="7">
    <source>
    </source>
</evidence>
<evidence type="ECO:0000305" key="8"/>
<evidence type="ECO:0000312" key="9">
    <source>
        <dbReference type="HGNC" id="HGNC:23483"/>
    </source>
</evidence>
<evidence type="ECO:0007744" key="10">
    <source>
    </source>
</evidence>
<evidence type="ECO:0007744" key="11">
    <source>
    </source>
</evidence>
<evidence type="ECO:0007744" key="12">
    <source>
    </source>
</evidence>
<evidence type="ECO:0007744" key="13">
    <source>
    </source>
</evidence>
<sequence>MAEVRKFTKRLSKPGTAAELRQSVSEAVRGSVVLEKAKVVEPLDYENVIAQRKTQIYSDPLRDLLMFPMEDISISVIGRQRRTVQSTVPEDAEKRAQSLFVKECIKTYSTDWHVVNYKYEDFSGDFRMLPCKSLRPEKIPNHVFEIDEDCEKDEDSSSLCSQKGGVIKQGWLHKANVNSTITVTMKVFKRRYFYLTQLPDGSYILNSYKDEKNSKESKGCIYLDACIDVVQCPKMRRHAFELKMLDKYSHYLAAETEQEMEEWLITLKKIIQINTDSLVQEKKETVETAQDDETSSQGKAENIMASLERSMHPELMKYGRETEQLNKLSRGDGRQNLFSFDSEVQRLDFSGIEPDIKPFEEKCNKRFLVNCHDLTFNILGQIGDNAKGPPTNVEPFFINLALFDVKNNCKISADFHVDLNPPSVREMLWGSSTQLASDGSPKGSSPESYIHGIAESQLRYIQQGIFSVTNPHPEIFLVARIEKVLQGNITHCAEPYIKNSDPVKTAQKVHRTAKQVCSRLGQYRMPFAWAARPIFKDTQGSLDLDGRFSPLYKQDSSKLSSEDILKLLSEYKKPEKTKLQIIPGQLNITVECVPVDLSNCITSSYVPLKPFEKNCQNITVEVEEFVPEMTKYCYPFTIYKNHLYVYPLQLKYDSQKTFAKARNIAVCVEFRDSDESDASALKCIYGKPAGSVFTTNAYAVVSHHNQNPEFYDEIKIELPIHLHQKHHLLFTFYHVSCEINTKGTTKKQDTVETPVGFAWVPLLKDGRIITFEQQLPVSANLPPGYLNLNDAESRRQCNVDIKWVDGAKPLLKIKSHLESTIYTQDLHVHKFFHHCQLIQSGSKEVPGELIKYLKCLHAMEIQVMIQFLPVILMQLFRVLTNMTHEDDVPINCTMVLLHIVSKCHEEGLDSYLRSFIKYSFRPEKPSAPQAQLIHETLATTMIAILKQSADFLSINKLLKYSWFFFEIIAKSMATYLLEENKIKLPRGQRFPETYHHVLHSLLLAIIPHVTIRYAEIPDESRNVNYSLASFLKRCLTLMDRGFIFNLINDYISGFSPKDPKVLAEYKFEFLQTICNHEHYIPLNLPMAFAKPKLQRVQDSNLEYSLSDEYCKHHFLVGLLLRETSIALQDNYEIRYTAISVIKNLLIKHAFDTRYQHKNQQAKIAQLYLPFVGLLLENIQRLAGRDTLYSCAAMPNSASRDEFPCGFTSPANRGSLSTDKDTAYGSFQNGHGIKREDSRGSLIPEGATGFPDQGNTGENTRQSSTRSSVSQYNRLDQYEIRSLLMCYLYIVKMISEDTLLTYWNKVSPQELINILILLEVCLFHFRYMGKRNIARVHDAWLSKHFGIDRKSQTMPALRNRSGVMQARLQHLSSLESSFTLNHSSTTTEADIFHQALLEGNTATEVSLTVLDTISFFTQCFKTQLLNNDGHNPLMKKVFDIHLAFLKNGQSEVSLKHVFASLRAFISKFPSAFFKGRVNMCAAFCYEVLKCCTSKISSTRNEASALLYLLMRNNFEYTKRKTFLRTHLQIIIAVSQLIADVALSGGSRFQESLFIINNFANSDRPMKATAFPAEVKDLTKRIRTVLMATAQMKEHEKDPEMLIDLQYSLAKSYASTPELRKTWLDSMAKIHVKNGDFSEAAMCYVHVAALVAEFLHRKKLFPNGCSAFKKITPNIDEEGAMKEDAGMMDVHYSEEVLLELLEQCVDGLWKAERYEIISEISKLIVPIYEKRREFEKLTQVYRTLHGAYTKILEVMHTKKRLLGTFFRVAFYGQSFFEEEDGKEYIYKEPKLTGLSEISLRLVKLYGEKFGTENVKIIQDSDKVNAKELDPKYAHIQVTYVKPYFDDKELTERKTEFERNHNISRFVFEAPYTLSGKKQGCIEEQCKRRTILTTSNSFPYVKKRIPINCEQQINLKPIDVATDEIKDKTAELQKLCSSTDVDMIQLQLKLQGCVSVQVNAGPLAYARAFLNDSQASKYPPKKVSELKDMFRKFIQACSIALELNERLIKEDQVEYHEGLKSNFRDMVKELSDIIHEQILQEDTMHSPWMSNTLHVFCAISGTSSDRGYGSPRYAEV</sequence>
<organism>
    <name type="scientific">Homo sapiens</name>
    <name type="common">Human</name>
    <dbReference type="NCBI Taxonomy" id="9606"/>
    <lineage>
        <taxon>Eukaryota</taxon>
        <taxon>Metazoa</taxon>
        <taxon>Chordata</taxon>
        <taxon>Craniata</taxon>
        <taxon>Vertebrata</taxon>
        <taxon>Euteleostomi</taxon>
        <taxon>Mammalia</taxon>
        <taxon>Eutheria</taxon>
        <taxon>Euarchontoglires</taxon>
        <taxon>Primates</taxon>
        <taxon>Haplorrhini</taxon>
        <taxon>Catarrhini</taxon>
        <taxon>Hominidae</taxon>
        <taxon>Homo</taxon>
    </lineage>
</organism>
<dbReference type="EMBL" id="AY692226">
    <property type="protein sequence ID" value="AAU04438.1"/>
    <property type="molecule type" value="mRNA"/>
</dbReference>
<dbReference type="EMBL" id="AC007021">
    <property type="status" value="NOT_ANNOTATED_CDS"/>
    <property type="molecule type" value="Genomic_DNA"/>
</dbReference>
<dbReference type="EMBL" id="AL391237">
    <property type="status" value="NOT_ANNOTATED_CDS"/>
    <property type="molecule type" value="Genomic_DNA"/>
</dbReference>
<dbReference type="EMBL" id="AL391280">
    <property type="status" value="NOT_ANNOTATED_CDS"/>
    <property type="molecule type" value="Genomic_DNA"/>
</dbReference>
<dbReference type="EMBL" id="CH471161">
    <property type="protein sequence ID" value="EAW89895.1"/>
    <property type="molecule type" value="Genomic_DNA"/>
</dbReference>
<dbReference type="EMBL" id="AK056684">
    <property type="protein sequence ID" value="BAB71253.1"/>
    <property type="status" value="ALT_INIT"/>
    <property type="molecule type" value="mRNA"/>
</dbReference>
<dbReference type="EMBL" id="AK125641">
    <property type="protein sequence ID" value="BAC86230.1"/>
    <property type="status" value="ALT_INIT"/>
    <property type="molecule type" value="mRNA"/>
</dbReference>
<dbReference type="EMBL" id="BC047713">
    <property type="protein sequence ID" value="AAH47713.1"/>
    <property type="molecule type" value="mRNA"/>
</dbReference>
<dbReference type="CCDS" id="CCDS35373.1"/>
<dbReference type="RefSeq" id="NP_653259.3">
    <property type="nucleotide sequence ID" value="NM_144658.3"/>
</dbReference>
<dbReference type="SMR" id="Q5JSL3"/>
<dbReference type="BioGRID" id="126589">
    <property type="interactions" value="51"/>
</dbReference>
<dbReference type="FunCoup" id="Q5JSL3">
    <property type="interactions" value="1392"/>
</dbReference>
<dbReference type="IntAct" id="Q5JSL3">
    <property type="interactions" value="26"/>
</dbReference>
<dbReference type="MINT" id="Q5JSL3"/>
<dbReference type="STRING" id="9606.ENSP00000276202"/>
<dbReference type="GlyCosmos" id="Q5JSL3">
    <property type="glycosylation" value="1 site, 2 glycans"/>
</dbReference>
<dbReference type="GlyGen" id="Q5JSL3">
    <property type="glycosylation" value="1 site, 2 O-linked glycans (1 site)"/>
</dbReference>
<dbReference type="iPTMnet" id="Q5JSL3"/>
<dbReference type="MetOSite" id="Q5JSL3"/>
<dbReference type="PhosphoSitePlus" id="Q5JSL3"/>
<dbReference type="BioMuta" id="DOCK11"/>
<dbReference type="DMDM" id="158563857"/>
<dbReference type="jPOST" id="Q5JSL3"/>
<dbReference type="MassIVE" id="Q5JSL3"/>
<dbReference type="PaxDb" id="9606-ENSP00000276202"/>
<dbReference type="PeptideAtlas" id="Q5JSL3"/>
<dbReference type="ProteomicsDB" id="63163"/>
<dbReference type="Pumba" id="Q5JSL3"/>
<dbReference type="Antibodypedia" id="29701">
    <property type="antibodies" value="53 antibodies from 17 providers"/>
</dbReference>
<dbReference type="DNASU" id="139818"/>
<dbReference type="Ensembl" id="ENST00000276202.9">
    <property type="protein sequence ID" value="ENSP00000276202.7"/>
    <property type="gene ID" value="ENSG00000147251.16"/>
</dbReference>
<dbReference type="GeneID" id="139818"/>
<dbReference type="KEGG" id="hsa:139818"/>
<dbReference type="MANE-Select" id="ENST00000276202.9">
    <property type="protein sequence ID" value="ENSP00000276202.7"/>
    <property type="RefSeq nucleotide sequence ID" value="NM_144658.4"/>
    <property type="RefSeq protein sequence ID" value="NP_653259.3"/>
</dbReference>
<dbReference type="UCSC" id="uc004eqp.3">
    <property type="organism name" value="human"/>
</dbReference>
<dbReference type="AGR" id="HGNC:23483"/>
<dbReference type="CTD" id="139818"/>
<dbReference type="DisGeNET" id="139818"/>
<dbReference type="GeneCards" id="DOCK11"/>
<dbReference type="HGNC" id="HGNC:23483">
    <property type="gene designation" value="DOCK11"/>
</dbReference>
<dbReference type="HPA" id="ENSG00000147251">
    <property type="expression patterns" value="Tissue enhanced (adipose)"/>
</dbReference>
<dbReference type="MalaCards" id="DOCK11"/>
<dbReference type="MIM" id="300681">
    <property type="type" value="gene"/>
</dbReference>
<dbReference type="MIM" id="301109">
    <property type="type" value="phenotype"/>
</dbReference>
<dbReference type="neXtProt" id="NX_Q5JSL3"/>
<dbReference type="OpenTargets" id="ENSG00000147251"/>
<dbReference type="Orphanet" id="658951">
    <property type="disease" value="Early-onset immune dysregulation due to DOCK11 complete deficiency"/>
</dbReference>
<dbReference type="Orphanet" id="658946">
    <property type="disease" value="Early-onset immune dysregulation with autoimmunity due to DOCK11 partial deficiency"/>
</dbReference>
<dbReference type="PharmGKB" id="PA128394757"/>
<dbReference type="VEuPathDB" id="HostDB:ENSG00000147251"/>
<dbReference type="eggNOG" id="KOG1997">
    <property type="taxonomic scope" value="Eukaryota"/>
</dbReference>
<dbReference type="GeneTree" id="ENSGT00940000155658"/>
<dbReference type="InParanoid" id="Q5JSL3"/>
<dbReference type="OrthoDB" id="47328at2759"/>
<dbReference type="PAN-GO" id="Q5JSL3">
    <property type="GO annotations" value="4 GO annotations based on evolutionary models"/>
</dbReference>
<dbReference type="PhylomeDB" id="Q5JSL3"/>
<dbReference type="TreeFam" id="TF313629"/>
<dbReference type="PathwayCommons" id="Q5JSL3"/>
<dbReference type="Reactome" id="R-HSA-9013148">
    <property type="pathway name" value="CDC42 GTPase cycle"/>
</dbReference>
<dbReference type="Reactome" id="R-HSA-9013149">
    <property type="pathway name" value="RAC1 GTPase cycle"/>
</dbReference>
<dbReference type="Reactome" id="R-HSA-983231">
    <property type="pathway name" value="Factors involved in megakaryocyte development and platelet production"/>
</dbReference>
<dbReference type="SignaLink" id="Q5JSL3"/>
<dbReference type="BioGRID-ORCS" id="139818">
    <property type="hits" value="13 hits in 778 CRISPR screens"/>
</dbReference>
<dbReference type="ChiTaRS" id="DOCK11">
    <property type="organism name" value="human"/>
</dbReference>
<dbReference type="GeneWiki" id="Dock11"/>
<dbReference type="GenomeRNAi" id="139818"/>
<dbReference type="Pharos" id="Q5JSL3">
    <property type="development level" value="Tdark"/>
</dbReference>
<dbReference type="PRO" id="PR:Q5JSL3"/>
<dbReference type="Proteomes" id="UP000005640">
    <property type="component" value="Chromosome X"/>
</dbReference>
<dbReference type="RNAct" id="Q5JSL3">
    <property type="molecule type" value="protein"/>
</dbReference>
<dbReference type="Bgee" id="ENSG00000147251">
    <property type="expression patterns" value="Expressed in parietal pleura and 179 other cell types or tissues"/>
</dbReference>
<dbReference type="ExpressionAtlas" id="Q5JSL3">
    <property type="expression patterns" value="baseline and differential"/>
</dbReference>
<dbReference type="GO" id="GO:0005829">
    <property type="term" value="C:cytosol"/>
    <property type="evidence" value="ECO:0000304"/>
    <property type="project" value="Reactome"/>
</dbReference>
<dbReference type="GO" id="GO:0005085">
    <property type="term" value="F:guanyl-nucleotide exchange factor activity"/>
    <property type="evidence" value="ECO:0000250"/>
    <property type="project" value="UniProtKB"/>
</dbReference>
<dbReference type="GO" id="GO:0031267">
    <property type="term" value="F:small GTPase binding"/>
    <property type="evidence" value="ECO:0007669"/>
    <property type="project" value="Ensembl"/>
</dbReference>
<dbReference type="GO" id="GO:0001782">
    <property type="term" value="P:B cell homeostasis"/>
    <property type="evidence" value="ECO:0000250"/>
    <property type="project" value="UniProtKB"/>
</dbReference>
<dbReference type="GO" id="GO:0002315">
    <property type="term" value="P:marginal zone B cell differentiation"/>
    <property type="evidence" value="ECO:0000250"/>
    <property type="project" value="UniProtKB"/>
</dbReference>
<dbReference type="GO" id="GO:0051491">
    <property type="term" value="P:positive regulation of filopodium assembly"/>
    <property type="evidence" value="ECO:0000315"/>
    <property type="project" value="UniProtKB"/>
</dbReference>
<dbReference type="GO" id="GO:0043547">
    <property type="term" value="P:positive regulation of GTPase activity"/>
    <property type="evidence" value="ECO:0000250"/>
    <property type="project" value="UniProtKB"/>
</dbReference>
<dbReference type="GO" id="GO:0035023">
    <property type="term" value="P:regulation of Rho protein signal transduction"/>
    <property type="evidence" value="ECO:0000318"/>
    <property type="project" value="GO_Central"/>
</dbReference>
<dbReference type="GO" id="GO:0007264">
    <property type="term" value="P:small GTPase-mediated signal transduction"/>
    <property type="evidence" value="ECO:0007669"/>
    <property type="project" value="InterPro"/>
</dbReference>
<dbReference type="CDD" id="cd08697">
    <property type="entry name" value="C2_Dock-D"/>
    <property type="match status" value="1"/>
</dbReference>
<dbReference type="CDD" id="cd11700">
    <property type="entry name" value="DHR2_DOCK11"/>
    <property type="match status" value="1"/>
</dbReference>
<dbReference type="CDD" id="cd13267">
    <property type="entry name" value="PH_DOCK-D"/>
    <property type="match status" value="1"/>
</dbReference>
<dbReference type="FunFam" id="1.20.58.740:FF:000001">
    <property type="entry name" value="dedicator of cytokinesis protein 9 isoform X1"/>
    <property type="match status" value="1"/>
</dbReference>
<dbReference type="FunFam" id="2.30.29.30:FF:000016">
    <property type="entry name" value="dedicator of cytokinesis protein 9 isoform X1"/>
    <property type="match status" value="1"/>
</dbReference>
<dbReference type="FunFam" id="2.60.40.150:FF:000015">
    <property type="entry name" value="dedicator of cytokinesis protein 9 isoform X1"/>
    <property type="match status" value="1"/>
</dbReference>
<dbReference type="FunFam" id="1.25.40.410:FF:000001">
    <property type="entry name" value="dedicator of cytokinesis protein 9 isoform X2"/>
    <property type="match status" value="1"/>
</dbReference>
<dbReference type="Gene3D" id="1.20.58.740">
    <property type="match status" value="1"/>
</dbReference>
<dbReference type="Gene3D" id="1.25.40.410">
    <property type="match status" value="1"/>
</dbReference>
<dbReference type="Gene3D" id="2.60.40.150">
    <property type="entry name" value="C2 domain"/>
    <property type="match status" value="1"/>
</dbReference>
<dbReference type="Gene3D" id="2.30.29.30">
    <property type="entry name" value="Pleckstrin-homology domain (PH domain)/Phosphotyrosine-binding domain (PTB)"/>
    <property type="match status" value="1"/>
</dbReference>
<dbReference type="InterPro" id="IPR016024">
    <property type="entry name" value="ARM-type_fold"/>
</dbReference>
<dbReference type="InterPro" id="IPR037809">
    <property type="entry name" value="C2_Dock-D"/>
</dbReference>
<dbReference type="InterPro" id="IPR027007">
    <property type="entry name" value="C2_DOCK-type_domain"/>
</dbReference>
<dbReference type="InterPro" id="IPR035892">
    <property type="entry name" value="C2_domain_sf"/>
</dbReference>
<dbReference type="InterPro" id="IPR026791">
    <property type="entry name" value="DOCK"/>
</dbReference>
<dbReference type="InterPro" id="IPR021816">
    <property type="entry name" value="DOCK_C/D_N"/>
</dbReference>
<dbReference type="InterPro" id="IPR043161">
    <property type="entry name" value="DOCK_C_lobe_A"/>
</dbReference>
<dbReference type="InterPro" id="IPR043162">
    <property type="entry name" value="DOCK_C_lobe_C"/>
</dbReference>
<dbReference type="InterPro" id="IPR027357">
    <property type="entry name" value="DOCKER_dom"/>
</dbReference>
<dbReference type="InterPro" id="IPR046769">
    <property type="entry name" value="DOCKER_Lobe_A"/>
</dbReference>
<dbReference type="InterPro" id="IPR046770">
    <property type="entry name" value="DOCKER_Lobe_B"/>
</dbReference>
<dbReference type="InterPro" id="IPR046773">
    <property type="entry name" value="DOCKER_Lobe_C"/>
</dbReference>
<dbReference type="InterPro" id="IPR011993">
    <property type="entry name" value="PH-like_dom_sf"/>
</dbReference>
<dbReference type="InterPro" id="IPR001849">
    <property type="entry name" value="PH_domain"/>
</dbReference>
<dbReference type="PANTHER" id="PTHR23317">
    <property type="entry name" value="DEDICATOR OF CYTOKINESIS DOCK"/>
    <property type="match status" value="1"/>
</dbReference>
<dbReference type="PANTHER" id="PTHR23317:SF81">
    <property type="entry name" value="DEDICATOR OF CYTOKINESIS PROTEIN 11"/>
    <property type="match status" value="1"/>
</dbReference>
<dbReference type="Pfam" id="PF06920">
    <property type="entry name" value="DHR-2_Lobe_A"/>
    <property type="match status" value="1"/>
</dbReference>
<dbReference type="Pfam" id="PF20422">
    <property type="entry name" value="DHR-2_Lobe_B"/>
    <property type="match status" value="1"/>
</dbReference>
<dbReference type="Pfam" id="PF20421">
    <property type="entry name" value="DHR-2_Lobe_C"/>
    <property type="match status" value="1"/>
</dbReference>
<dbReference type="Pfam" id="PF14429">
    <property type="entry name" value="DOCK-C2"/>
    <property type="match status" value="1"/>
</dbReference>
<dbReference type="Pfam" id="PF11878">
    <property type="entry name" value="DOCK_C-D_N"/>
    <property type="match status" value="1"/>
</dbReference>
<dbReference type="Pfam" id="PF00169">
    <property type="entry name" value="PH"/>
    <property type="match status" value="1"/>
</dbReference>
<dbReference type="SMART" id="SM00233">
    <property type="entry name" value="PH"/>
    <property type="match status" value="1"/>
</dbReference>
<dbReference type="SUPFAM" id="SSF48371">
    <property type="entry name" value="ARM repeat"/>
    <property type="match status" value="1"/>
</dbReference>
<dbReference type="SUPFAM" id="SSF50729">
    <property type="entry name" value="PH domain-like"/>
    <property type="match status" value="1"/>
</dbReference>
<dbReference type="PROSITE" id="PS51650">
    <property type="entry name" value="C2_DOCK"/>
    <property type="match status" value="1"/>
</dbReference>
<dbReference type="PROSITE" id="PS51651">
    <property type="entry name" value="DOCKER"/>
    <property type="match status" value="1"/>
</dbReference>
<dbReference type="PROSITE" id="PS50003">
    <property type="entry name" value="PH_DOMAIN"/>
    <property type="match status" value="1"/>
</dbReference>
<gene>
    <name evidence="9" type="primary">DOCK11</name>
    <name evidence="8" type="synonym">ZIZ2</name>
</gene>
<comment type="function">
    <text evidence="1 7">Guanine nucleotide-exchange factor (GEF) that activates CDC42 by exchanging bound GDP for free GTP (PubMed:37342957). Required for marginal zone (MZ) B-cell development, is associated with early bone marrow B-cell development, MZ B-cell formation, MZ B-cell number and marginal metallophilic macrophages morphology (By similarity). Facilitates filopodia formation through the activation of CDC42 (PubMed:37342957).</text>
</comment>
<comment type="subunit">
    <text evidence="1">Interacts with CDC42.</text>
</comment>
<comment type="domain">
    <text evidence="1">The DOCKER domain is necessary for the GEF activity. The DOCKER domain mediates interaction with activated CDC42 in conjunction with residues 66-126.</text>
</comment>
<comment type="disease" evidence="6 7">
    <disease id="DI-06712">
        <name>Autoinflammatory disease, multisystem, with immune dysregulation, X-linked</name>
        <acronym>ADMIDX</acronym>
        <description>An X-linked recessive disorder apparent in infancy or early childhood, and characterized by immune dysregulation, variable cytopenias, and systemic or organ-specific autoinflammatory manifestations. Clinical features include systemic lupus erythematosus, panniculitis, inflammatory bowel disease, pulmonary disease, or arthritis associated with recurrent fever, leukocytosis, lymphoproliferation, and hepatosplenomegaly in the absence of an infectious agent. Death in childhood has been reported.</description>
        <dbReference type="MIM" id="301109"/>
    </disease>
    <text>The disease is caused by variants affecting the gene represented in this entry.</text>
</comment>
<comment type="miscellaneous">
    <text evidence="8">'Zizim' means 'spike' in Hebrew.</text>
</comment>
<comment type="similarity">
    <text evidence="3">Belongs to the DOCK family.</text>
</comment>
<comment type="sequence caution" evidence="8">
    <conflict type="erroneous initiation">
        <sequence resource="EMBL-CDS" id="BAB71253"/>
    </conflict>
    <text>Truncated N-terminus.</text>
</comment>
<comment type="sequence caution" evidence="8">
    <conflict type="erroneous initiation">
        <sequence resource="EMBL-CDS" id="BAC86230"/>
    </conflict>
    <text>Truncated N-terminus.</text>
</comment>
<keyword id="KW-0225">Disease variant</keyword>
<keyword id="KW-0344">Guanine-nucleotide releasing factor</keyword>
<keyword id="KW-0597">Phosphoprotein</keyword>
<keyword id="KW-1267">Proteomics identification</keyword>
<keyword id="KW-1185">Reference proteome</keyword>
<feature type="chain" id="PRO_0000299558" description="Dedicator of cytokinesis protein 11">
    <location>
        <begin position="1"/>
        <end position="2073"/>
    </location>
</feature>
<feature type="domain" description="PH" evidence="2">
    <location>
        <begin position="165"/>
        <end position="272"/>
    </location>
</feature>
<feature type="domain" description="C2 DOCK-type" evidence="3">
    <location>
        <begin position="640"/>
        <end position="818"/>
    </location>
</feature>
<feature type="domain" description="DOCKER" evidence="4">
    <location>
        <begin position="1609"/>
        <end position="2036"/>
    </location>
</feature>
<feature type="region of interest" description="Disordered" evidence="5">
    <location>
        <begin position="1226"/>
        <end position="1267"/>
    </location>
</feature>
<feature type="modified residue" description="Phosphoserine" evidence="12">
    <location>
        <position position="12"/>
    </location>
</feature>
<feature type="modified residue" description="Phosphothreonine" evidence="12">
    <location>
        <position position="16"/>
    </location>
</feature>
<feature type="modified residue" description="Phosphoserine" evidence="12">
    <location>
        <position position="23"/>
    </location>
</feature>
<feature type="modified residue" description="Phosphoserine" evidence="10">
    <location>
        <position position="161"/>
    </location>
</feature>
<feature type="modified residue" description="Phosphotyrosine" evidence="11">
    <location>
        <position position="248"/>
    </location>
</feature>
<feature type="modified residue" description="Phosphoserine" evidence="12">
    <location>
        <position position="306"/>
    </location>
</feature>
<feature type="modified residue" description="Phosphoserine" evidence="11 12 13">
    <location>
        <position position="440"/>
    </location>
</feature>
<feature type="modified residue" description="Phosphoserine" evidence="1">
    <location>
        <position position="445"/>
    </location>
</feature>
<feature type="modified residue" description="Phosphoserine" evidence="12">
    <location>
        <position position="1237"/>
    </location>
</feature>
<feature type="modified residue" description="Phosphoserine" evidence="12">
    <location>
        <position position="1240"/>
    </location>
</feature>
<feature type="sequence variant" id="VAR_088978" description="In ADMIDX; likely pathogenic; severely decreased CDC42 activation in patient B-lymphoblastoid cells; dbSNP:rs1202446895." evidence="7">
    <original>Y</original>
    <variation>C</variation>
    <location>
        <position position="108"/>
    </location>
</feature>
<feature type="sequence variant" id="VAR_088240" description="In ADMIDX; uncertain significance." evidence="6">
    <original>T</original>
    <variation>S</variation>
    <location>
        <position position="275"/>
    </location>
</feature>
<feature type="sequence variant" id="VAR_088241" description="In ADMIDX; uncertain significance; decreased CDC42 activation in patient platelets." evidence="6">
    <original>D</original>
    <variation>Y</variation>
    <location>
        <position position="414"/>
    </location>
</feature>
<feature type="sequence variant" id="VAR_034854" description="In dbSNP:rs16995229.">
    <original>I</original>
    <variation>F</variation>
    <location>
        <position position="813"/>
    </location>
</feature>
<feature type="sequence variant" id="VAR_088242" description="In ADMIDX; severely impaired CDC42 activation in patient platelets." evidence="6">
    <original>L</original>
    <variation>R</variation>
    <location>
        <position position="1298"/>
    </location>
</feature>
<feature type="sequence variant" id="VAR_088243" description="In ADMIDX; uncertain significance." evidence="6">
    <original>H</original>
    <variation>R</variation>
    <location>
        <position position="1336"/>
    </location>
</feature>
<feature type="sequence variant" id="VAR_088244" description="In ADMIDX; uncertain significance; mildly decreased CDC42 activation in patient platelets; dbSNP:rs927463788." evidence="6">
    <original>R</original>
    <variation>Q</variation>
    <location>
        <position position="1366"/>
    </location>
</feature>
<feature type="sequence variant" id="VAR_088245" description="In ADMIDX; uncertain significance; dbSNP:rs1023180244." evidence="6">
    <original>L</original>
    <variation>S</variation>
    <location>
        <position position="1706"/>
    </location>
</feature>
<feature type="sequence variant" id="VAR_088979" description="In ADMIDX; likely pathogenic; severely decreased CDC42 activation in patient B-lymphoblastoid cells; decreased function in positive regulation of filopodium assembly." evidence="7">
    <original>W</original>
    <variation>S</variation>
    <location>
        <position position="1707"/>
    </location>
</feature>
<feature type="sequence variant" id="VAR_088246" description="In ADMIDX; decreased CDC42 activation in patient platelets; dbSNP:rs750008778." evidence="6">
    <original>R</original>
    <variation>C</variation>
    <location>
        <position position="1885"/>
    </location>
</feature>
<feature type="sequence conflict" description="In Ref. 1; AAU04438." evidence="8" ref="1">
    <original>F</original>
    <variation>L</variation>
    <location>
        <position position="376"/>
    </location>
</feature>
<feature type="sequence conflict" description="In Ref. 1; AAU04438." evidence="8" ref="1">
    <original>N</original>
    <variation>K</variation>
    <location>
        <position position="740"/>
    </location>
</feature>
<feature type="sequence conflict" description="In Ref. 1; AAU04438 and 4; BAB71253." evidence="8" ref="1 4">
    <original>K</original>
    <variation>E</variation>
    <location>
        <position position="1984"/>
    </location>
</feature>
<protein>
    <recommendedName>
        <fullName evidence="8">Dedicator of cytokinesis protein 11</fullName>
    </recommendedName>
    <alternativeName>
        <fullName>Activated Cdc42-associated guanine nucleotide exchange factor</fullName>
        <shortName>ACG</shortName>
    </alternativeName>
    <alternativeName>
        <fullName evidence="8">Zizimin-2</fullName>
    </alternativeName>
</protein>
<name>DOC11_HUMAN</name>
<proteinExistence type="evidence at protein level"/>
<reference key="1">
    <citation type="journal article" date="2006" name="J. Biol. Chem.">
        <title>Identification of a DOCK180-related guanine nucleotide exchange factor that is capable of mediating a positive feedback activation of Cdc42.</title>
        <authorList>
            <person name="Lin Q."/>
            <person name="Yang W."/>
            <person name="Baird D."/>
            <person name="Feng Q."/>
            <person name="Cerione R.A."/>
        </authorList>
    </citation>
    <scope>NUCLEOTIDE SEQUENCE [MRNA]</scope>
    <source>
        <tissue>Brain</tissue>
    </source>
</reference>
<reference key="2">
    <citation type="journal article" date="2005" name="Nature">
        <title>The DNA sequence of the human X chromosome.</title>
        <authorList>
            <person name="Ross M.T."/>
            <person name="Grafham D.V."/>
            <person name="Coffey A.J."/>
            <person name="Scherer S."/>
            <person name="McLay K."/>
            <person name="Muzny D."/>
            <person name="Platzer M."/>
            <person name="Howell G.R."/>
            <person name="Burrows C."/>
            <person name="Bird C.P."/>
            <person name="Frankish A."/>
            <person name="Lovell F.L."/>
            <person name="Howe K.L."/>
            <person name="Ashurst J.L."/>
            <person name="Fulton R.S."/>
            <person name="Sudbrak R."/>
            <person name="Wen G."/>
            <person name="Jones M.C."/>
            <person name="Hurles M.E."/>
            <person name="Andrews T.D."/>
            <person name="Scott C.E."/>
            <person name="Searle S."/>
            <person name="Ramser J."/>
            <person name="Whittaker A."/>
            <person name="Deadman R."/>
            <person name="Carter N.P."/>
            <person name="Hunt S.E."/>
            <person name="Chen R."/>
            <person name="Cree A."/>
            <person name="Gunaratne P."/>
            <person name="Havlak P."/>
            <person name="Hodgson A."/>
            <person name="Metzker M.L."/>
            <person name="Richards S."/>
            <person name="Scott G."/>
            <person name="Steffen D."/>
            <person name="Sodergren E."/>
            <person name="Wheeler D.A."/>
            <person name="Worley K.C."/>
            <person name="Ainscough R."/>
            <person name="Ambrose K.D."/>
            <person name="Ansari-Lari M.A."/>
            <person name="Aradhya S."/>
            <person name="Ashwell R.I."/>
            <person name="Babbage A.K."/>
            <person name="Bagguley C.L."/>
            <person name="Ballabio A."/>
            <person name="Banerjee R."/>
            <person name="Barker G.E."/>
            <person name="Barlow K.F."/>
            <person name="Barrett I.P."/>
            <person name="Bates K.N."/>
            <person name="Beare D.M."/>
            <person name="Beasley H."/>
            <person name="Beasley O."/>
            <person name="Beck A."/>
            <person name="Bethel G."/>
            <person name="Blechschmidt K."/>
            <person name="Brady N."/>
            <person name="Bray-Allen S."/>
            <person name="Bridgeman A.M."/>
            <person name="Brown A.J."/>
            <person name="Brown M.J."/>
            <person name="Bonnin D."/>
            <person name="Bruford E.A."/>
            <person name="Buhay C."/>
            <person name="Burch P."/>
            <person name="Burford D."/>
            <person name="Burgess J."/>
            <person name="Burrill W."/>
            <person name="Burton J."/>
            <person name="Bye J.M."/>
            <person name="Carder C."/>
            <person name="Carrel L."/>
            <person name="Chako J."/>
            <person name="Chapman J.C."/>
            <person name="Chavez D."/>
            <person name="Chen E."/>
            <person name="Chen G."/>
            <person name="Chen Y."/>
            <person name="Chen Z."/>
            <person name="Chinault C."/>
            <person name="Ciccodicola A."/>
            <person name="Clark S.Y."/>
            <person name="Clarke G."/>
            <person name="Clee C.M."/>
            <person name="Clegg S."/>
            <person name="Clerc-Blankenburg K."/>
            <person name="Clifford K."/>
            <person name="Cobley V."/>
            <person name="Cole C.G."/>
            <person name="Conquer J.S."/>
            <person name="Corby N."/>
            <person name="Connor R.E."/>
            <person name="David R."/>
            <person name="Davies J."/>
            <person name="Davis C."/>
            <person name="Davis J."/>
            <person name="Delgado O."/>
            <person name="Deshazo D."/>
            <person name="Dhami P."/>
            <person name="Ding Y."/>
            <person name="Dinh H."/>
            <person name="Dodsworth S."/>
            <person name="Draper H."/>
            <person name="Dugan-Rocha S."/>
            <person name="Dunham A."/>
            <person name="Dunn M."/>
            <person name="Durbin K.J."/>
            <person name="Dutta I."/>
            <person name="Eades T."/>
            <person name="Ellwood M."/>
            <person name="Emery-Cohen A."/>
            <person name="Errington H."/>
            <person name="Evans K.L."/>
            <person name="Faulkner L."/>
            <person name="Francis F."/>
            <person name="Frankland J."/>
            <person name="Fraser A.E."/>
            <person name="Galgoczy P."/>
            <person name="Gilbert J."/>
            <person name="Gill R."/>
            <person name="Gloeckner G."/>
            <person name="Gregory S.G."/>
            <person name="Gribble S."/>
            <person name="Griffiths C."/>
            <person name="Grocock R."/>
            <person name="Gu Y."/>
            <person name="Gwilliam R."/>
            <person name="Hamilton C."/>
            <person name="Hart E.A."/>
            <person name="Hawes A."/>
            <person name="Heath P.D."/>
            <person name="Heitmann K."/>
            <person name="Hennig S."/>
            <person name="Hernandez J."/>
            <person name="Hinzmann B."/>
            <person name="Ho S."/>
            <person name="Hoffs M."/>
            <person name="Howden P.J."/>
            <person name="Huckle E.J."/>
            <person name="Hume J."/>
            <person name="Hunt P.J."/>
            <person name="Hunt A.R."/>
            <person name="Isherwood J."/>
            <person name="Jacob L."/>
            <person name="Johnson D."/>
            <person name="Jones S."/>
            <person name="de Jong P.J."/>
            <person name="Joseph S.S."/>
            <person name="Keenan S."/>
            <person name="Kelly S."/>
            <person name="Kershaw J.K."/>
            <person name="Khan Z."/>
            <person name="Kioschis P."/>
            <person name="Klages S."/>
            <person name="Knights A.J."/>
            <person name="Kosiura A."/>
            <person name="Kovar-Smith C."/>
            <person name="Laird G.K."/>
            <person name="Langford C."/>
            <person name="Lawlor S."/>
            <person name="Leversha M."/>
            <person name="Lewis L."/>
            <person name="Liu W."/>
            <person name="Lloyd C."/>
            <person name="Lloyd D.M."/>
            <person name="Loulseged H."/>
            <person name="Loveland J.E."/>
            <person name="Lovell J.D."/>
            <person name="Lozado R."/>
            <person name="Lu J."/>
            <person name="Lyne R."/>
            <person name="Ma J."/>
            <person name="Maheshwari M."/>
            <person name="Matthews L.H."/>
            <person name="McDowall J."/>
            <person name="McLaren S."/>
            <person name="McMurray A."/>
            <person name="Meidl P."/>
            <person name="Meitinger T."/>
            <person name="Milne S."/>
            <person name="Miner G."/>
            <person name="Mistry S.L."/>
            <person name="Morgan M."/>
            <person name="Morris S."/>
            <person name="Mueller I."/>
            <person name="Mullikin J.C."/>
            <person name="Nguyen N."/>
            <person name="Nordsiek G."/>
            <person name="Nyakatura G."/>
            <person name="O'dell C.N."/>
            <person name="Okwuonu G."/>
            <person name="Palmer S."/>
            <person name="Pandian R."/>
            <person name="Parker D."/>
            <person name="Parrish J."/>
            <person name="Pasternak S."/>
            <person name="Patel D."/>
            <person name="Pearce A.V."/>
            <person name="Pearson D.M."/>
            <person name="Pelan S.E."/>
            <person name="Perez L."/>
            <person name="Porter K.M."/>
            <person name="Ramsey Y."/>
            <person name="Reichwald K."/>
            <person name="Rhodes S."/>
            <person name="Ridler K.A."/>
            <person name="Schlessinger D."/>
            <person name="Schueler M.G."/>
            <person name="Sehra H.K."/>
            <person name="Shaw-Smith C."/>
            <person name="Shen H."/>
            <person name="Sheridan E.M."/>
            <person name="Shownkeen R."/>
            <person name="Skuce C.D."/>
            <person name="Smith M.L."/>
            <person name="Sotheran E.C."/>
            <person name="Steingruber H.E."/>
            <person name="Steward C.A."/>
            <person name="Storey R."/>
            <person name="Swann R.M."/>
            <person name="Swarbreck D."/>
            <person name="Tabor P.E."/>
            <person name="Taudien S."/>
            <person name="Taylor T."/>
            <person name="Teague B."/>
            <person name="Thomas K."/>
            <person name="Thorpe A."/>
            <person name="Timms K."/>
            <person name="Tracey A."/>
            <person name="Trevanion S."/>
            <person name="Tromans A.C."/>
            <person name="d'Urso M."/>
            <person name="Verduzco D."/>
            <person name="Villasana D."/>
            <person name="Waldron L."/>
            <person name="Wall M."/>
            <person name="Wang Q."/>
            <person name="Warren J."/>
            <person name="Warry G.L."/>
            <person name="Wei X."/>
            <person name="West A."/>
            <person name="Whitehead S.L."/>
            <person name="Whiteley M.N."/>
            <person name="Wilkinson J.E."/>
            <person name="Willey D.L."/>
            <person name="Williams G."/>
            <person name="Williams L."/>
            <person name="Williamson A."/>
            <person name="Williamson H."/>
            <person name="Wilming L."/>
            <person name="Woodmansey R.L."/>
            <person name="Wray P.W."/>
            <person name="Yen J."/>
            <person name="Zhang J."/>
            <person name="Zhou J."/>
            <person name="Zoghbi H."/>
            <person name="Zorilla S."/>
            <person name="Buck D."/>
            <person name="Reinhardt R."/>
            <person name="Poustka A."/>
            <person name="Rosenthal A."/>
            <person name="Lehrach H."/>
            <person name="Meindl A."/>
            <person name="Minx P.J."/>
            <person name="Hillier L.W."/>
            <person name="Willard H.F."/>
            <person name="Wilson R.K."/>
            <person name="Waterston R.H."/>
            <person name="Rice C.M."/>
            <person name="Vaudin M."/>
            <person name="Coulson A."/>
            <person name="Nelson D.L."/>
            <person name="Weinstock G."/>
            <person name="Sulston J.E."/>
            <person name="Durbin R.M."/>
            <person name="Hubbard T."/>
            <person name="Gibbs R.A."/>
            <person name="Beck S."/>
            <person name="Rogers J."/>
            <person name="Bentley D.R."/>
        </authorList>
    </citation>
    <scope>NUCLEOTIDE SEQUENCE [LARGE SCALE GENOMIC DNA]</scope>
</reference>
<reference key="3">
    <citation type="submission" date="2005-09" db="EMBL/GenBank/DDBJ databases">
        <authorList>
            <person name="Mural R.J."/>
            <person name="Istrail S."/>
            <person name="Sutton G.G."/>
            <person name="Florea L."/>
            <person name="Halpern A.L."/>
            <person name="Mobarry C.M."/>
            <person name="Lippert R."/>
            <person name="Walenz B."/>
            <person name="Shatkay H."/>
            <person name="Dew I."/>
            <person name="Miller J.R."/>
            <person name="Flanigan M.J."/>
            <person name="Edwards N.J."/>
            <person name="Bolanos R."/>
            <person name="Fasulo D."/>
            <person name="Halldorsson B.V."/>
            <person name="Hannenhalli S."/>
            <person name="Turner R."/>
            <person name="Yooseph S."/>
            <person name="Lu F."/>
            <person name="Nusskern D.R."/>
            <person name="Shue B.C."/>
            <person name="Zheng X.H."/>
            <person name="Zhong F."/>
            <person name="Delcher A.L."/>
            <person name="Huson D.H."/>
            <person name="Kravitz S.A."/>
            <person name="Mouchard L."/>
            <person name="Reinert K."/>
            <person name="Remington K.A."/>
            <person name="Clark A.G."/>
            <person name="Waterman M.S."/>
            <person name="Eichler E.E."/>
            <person name="Adams M.D."/>
            <person name="Hunkapiller M.W."/>
            <person name="Myers E.W."/>
            <person name="Venter J.C."/>
        </authorList>
    </citation>
    <scope>NUCLEOTIDE SEQUENCE [LARGE SCALE GENOMIC DNA]</scope>
</reference>
<reference key="4">
    <citation type="journal article" date="2004" name="Nat. Genet.">
        <title>Complete sequencing and characterization of 21,243 full-length human cDNAs.</title>
        <authorList>
            <person name="Ota T."/>
            <person name="Suzuki Y."/>
            <person name="Nishikawa T."/>
            <person name="Otsuki T."/>
            <person name="Sugiyama T."/>
            <person name="Irie R."/>
            <person name="Wakamatsu A."/>
            <person name="Hayashi K."/>
            <person name="Sato H."/>
            <person name="Nagai K."/>
            <person name="Kimura K."/>
            <person name="Makita H."/>
            <person name="Sekine M."/>
            <person name="Obayashi M."/>
            <person name="Nishi T."/>
            <person name="Shibahara T."/>
            <person name="Tanaka T."/>
            <person name="Ishii S."/>
            <person name="Yamamoto J."/>
            <person name="Saito K."/>
            <person name="Kawai Y."/>
            <person name="Isono Y."/>
            <person name="Nakamura Y."/>
            <person name="Nagahari K."/>
            <person name="Murakami K."/>
            <person name="Yasuda T."/>
            <person name="Iwayanagi T."/>
            <person name="Wagatsuma M."/>
            <person name="Shiratori A."/>
            <person name="Sudo H."/>
            <person name="Hosoiri T."/>
            <person name="Kaku Y."/>
            <person name="Kodaira H."/>
            <person name="Kondo H."/>
            <person name="Sugawara M."/>
            <person name="Takahashi M."/>
            <person name="Kanda K."/>
            <person name="Yokoi T."/>
            <person name="Furuya T."/>
            <person name="Kikkawa E."/>
            <person name="Omura Y."/>
            <person name="Abe K."/>
            <person name="Kamihara K."/>
            <person name="Katsuta N."/>
            <person name="Sato K."/>
            <person name="Tanikawa M."/>
            <person name="Yamazaki M."/>
            <person name="Ninomiya K."/>
            <person name="Ishibashi T."/>
            <person name="Yamashita H."/>
            <person name="Murakawa K."/>
            <person name="Fujimori K."/>
            <person name="Tanai H."/>
            <person name="Kimata M."/>
            <person name="Watanabe M."/>
            <person name="Hiraoka S."/>
            <person name="Chiba Y."/>
            <person name="Ishida S."/>
            <person name="Ono Y."/>
            <person name="Takiguchi S."/>
            <person name="Watanabe S."/>
            <person name="Yosida M."/>
            <person name="Hotuta T."/>
            <person name="Kusano J."/>
            <person name="Kanehori K."/>
            <person name="Takahashi-Fujii A."/>
            <person name="Hara H."/>
            <person name="Tanase T.-O."/>
            <person name="Nomura Y."/>
            <person name="Togiya S."/>
            <person name="Komai F."/>
            <person name="Hara R."/>
            <person name="Takeuchi K."/>
            <person name="Arita M."/>
            <person name="Imose N."/>
            <person name="Musashino K."/>
            <person name="Yuuki H."/>
            <person name="Oshima A."/>
            <person name="Sasaki N."/>
            <person name="Aotsuka S."/>
            <person name="Yoshikawa Y."/>
            <person name="Matsunawa H."/>
            <person name="Ichihara T."/>
            <person name="Shiohata N."/>
            <person name="Sano S."/>
            <person name="Moriya S."/>
            <person name="Momiyama H."/>
            <person name="Satoh N."/>
            <person name="Takami S."/>
            <person name="Terashima Y."/>
            <person name="Suzuki O."/>
            <person name="Nakagawa S."/>
            <person name="Senoh A."/>
            <person name="Mizoguchi H."/>
            <person name="Goto Y."/>
            <person name="Shimizu F."/>
            <person name="Wakebe H."/>
            <person name="Hishigaki H."/>
            <person name="Watanabe T."/>
            <person name="Sugiyama A."/>
            <person name="Takemoto M."/>
            <person name="Kawakami B."/>
            <person name="Yamazaki M."/>
            <person name="Watanabe K."/>
            <person name="Kumagai A."/>
            <person name="Itakura S."/>
            <person name="Fukuzumi Y."/>
            <person name="Fujimori Y."/>
            <person name="Komiyama M."/>
            <person name="Tashiro H."/>
            <person name="Tanigami A."/>
            <person name="Fujiwara T."/>
            <person name="Ono T."/>
            <person name="Yamada K."/>
            <person name="Fujii Y."/>
            <person name="Ozaki K."/>
            <person name="Hirao M."/>
            <person name="Ohmori Y."/>
            <person name="Kawabata A."/>
            <person name="Hikiji T."/>
            <person name="Kobatake N."/>
            <person name="Inagaki H."/>
            <person name="Ikema Y."/>
            <person name="Okamoto S."/>
            <person name="Okitani R."/>
            <person name="Kawakami T."/>
            <person name="Noguchi S."/>
            <person name="Itoh T."/>
            <person name="Shigeta K."/>
            <person name="Senba T."/>
            <person name="Matsumura K."/>
            <person name="Nakajima Y."/>
            <person name="Mizuno T."/>
            <person name="Morinaga M."/>
            <person name="Sasaki M."/>
            <person name="Togashi T."/>
            <person name="Oyama M."/>
            <person name="Hata H."/>
            <person name="Watanabe M."/>
            <person name="Komatsu T."/>
            <person name="Mizushima-Sugano J."/>
            <person name="Satoh T."/>
            <person name="Shirai Y."/>
            <person name="Takahashi Y."/>
            <person name="Nakagawa K."/>
            <person name="Okumura K."/>
            <person name="Nagase T."/>
            <person name="Nomura N."/>
            <person name="Kikuchi H."/>
            <person name="Masuho Y."/>
            <person name="Yamashita R."/>
            <person name="Nakai K."/>
            <person name="Yada T."/>
            <person name="Nakamura Y."/>
            <person name="Ohara O."/>
            <person name="Isogai T."/>
            <person name="Sugano S."/>
        </authorList>
    </citation>
    <scope>NUCLEOTIDE SEQUENCE [LARGE SCALE MRNA] OF 811-2073</scope>
    <source>
        <tissue>Synovium</tissue>
    </source>
</reference>
<reference key="5">
    <citation type="journal article" date="2004" name="Genome Res.">
        <title>The status, quality, and expansion of the NIH full-length cDNA project: the Mammalian Gene Collection (MGC).</title>
        <authorList>
            <consortium name="The MGC Project Team"/>
        </authorList>
    </citation>
    <scope>NUCLEOTIDE SEQUENCE [LARGE SCALE MRNA] OF 1283-2073</scope>
    <source>
        <tissue>Testis</tissue>
    </source>
</reference>
<reference key="6">
    <citation type="journal article" date="2007" name="Science">
        <title>ATM and ATR substrate analysis reveals extensive protein networks responsive to DNA damage.</title>
        <authorList>
            <person name="Matsuoka S."/>
            <person name="Ballif B.A."/>
            <person name="Smogorzewska A."/>
            <person name="McDonald E.R. III"/>
            <person name="Hurov K.E."/>
            <person name="Luo J."/>
            <person name="Bakalarski C.E."/>
            <person name="Zhao Z."/>
            <person name="Solimini N."/>
            <person name="Lerenthal Y."/>
            <person name="Shiloh Y."/>
            <person name="Gygi S.P."/>
            <person name="Elledge S.J."/>
        </authorList>
    </citation>
    <scope>PHOSPHORYLATION [LARGE SCALE ANALYSIS] AT SER-161</scope>
    <scope>IDENTIFICATION BY MASS SPECTROMETRY [LARGE SCALE ANALYSIS]</scope>
    <source>
        <tissue>Embryonic kidney</tissue>
    </source>
</reference>
<reference key="7">
    <citation type="journal article" date="2009" name="Sci. Signal.">
        <title>Quantitative phosphoproteomic analysis of T cell receptor signaling reveals system-wide modulation of protein-protein interactions.</title>
        <authorList>
            <person name="Mayya V."/>
            <person name="Lundgren D.H."/>
            <person name="Hwang S.-I."/>
            <person name="Rezaul K."/>
            <person name="Wu L."/>
            <person name="Eng J.K."/>
            <person name="Rodionov V."/>
            <person name="Han D.K."/>
        </authorList>
    </citation>
    <scope>PHOSPHORYLATION [LARGE SCALE ANALYSIS] AT TYR-248 AND SER-440</scope>
    <scope>IDENTIFICATION BY MASS SPECTROMETRY [LARGE SCALE ANALYSIS]</scope>
    <source>
        <tissue>Leukemic T-cell</tissue>
    </source>
</reference>
<reference key="8">
    <citation type="journal article" date="2010" name="Sci. Signal.">
        <title>Quantitative phosphoproteomics reveals widespread full phosphorylation site occupancy during mitosis.</title>
        <authorList>
            <person name="Olsen J.V."/>
            <person name="Vermeulen M."/>
            <person name="Santamaria A."/>
            <person name="Kumar C."/>
            <person name="Miller M.L."/>
            <person name="Jensen L.J."/>
            <person name="Gnad F."/>
            <person name="Cox J."/>
            <person name="Jensen T.S."/>
            <person name="Nigg E.A."/>
            <person name="Brunak S."/>
            <person name="Mann M."/>
        </authorList>
    </citation>
    <scope>IDENTIFICATION BY MASS SPECTROMETRY [LARGE SCALE ANALYSIS]</scope>
    <source>
        <tissue>Cervix carcinoma</tissue>
    </source>
</reference>
<reference key="9">
    <citation type="journal article" date="2011" name="BMC Syst. Biol.">
        <title>Initial characterization of the human central proteome.</title>
        <authorList>
            <person name="Burkard T.R."/>
            <person name="Planyavsky M."/>
            <person name="Kaupe I."/>
            <person name="Breitwieser F.P."/>
            <person name="Buerckstuemmer T."/>
            <person name="Bennett K.L."/>
            <person name="Superti-Furga G."/>
            <person name="Colinge J."/>
        </authorList>
    </citation>
    <scope>IDENTIFICATION BY MASS SPECTROMETRY [LARGE SCALE ANALYSIS]</scope>
</reference>
<reference key="10">
    <citation type="journal article" date="2013" name="J. Proteome Res.">
        <title>Toward a comprehensive characterization of a human cancer cell phosphoproteome.</title>
        <authorList>
            <person name="Zhou H."/>
            <person name="Di Palma S."/>
            <person name="Preisinger C."/>
            <person name="Peng M."/>
            <person name="Polat A.N."/>
            <person name="Heck A.J."/>
            <person name="Mohammed S."/>
        </authorList>
    </citation>
    <scope>PHOSPHORYLATION [LARGE SCALE ANALYSIS] AT SER-12; THR-16; SER-23; SER-306; SER-440; SER-1237 AND SER-1240</scope>
    <scope>IDENTIFICATION BY MASS SPECTROMETRY [LARGE SCALE ANALYSIS]</scope>
    <source>
        <tissue>Erythroleukemia</tissue>
    </source>
</reference>
<reference key="11">
    <citation type="journal article" date="2014" name="J. Proteomics">
        <title>An enzyme assisted RP-RPLC approach for in-depth analysis of human liver phosphoproteome.</title>
        <authorList>
            <person name="Bian Y."/>
            <person name="Song C."/>
            <person name="Cheng K."/>
            <person name="Dong M."/>
            <person name="Wang F."/>
            <person name="Huang J."/>
            <person name="Sun D."/>
            <person name="Wang L."/>
            <person name="Ye M."/>
            <person name="Zou H."/>
        </authorList>
    </citation>
    <scope>PHOSPHORYLATION [LARGE SCALE ANALYSIS] AT SER-440</scope>
    <scope>IDENTIFICATION BY MASS SPECTROMETRY [LARGE SCALE ANALYSIS]</scope>
    <source>
        <tissue>Liver</tissue>
    </source>
</reference>
<reference key="12">
    <citation type="journal article" date="2015" name="Proteomics">
        <title>N-terminome analysis of the human mitochondrial proteome.</title>
        <authorList>
            <person name="Vaca Jacome A.S."/>
            <person name="Rabilloud T."/>
            <person name="Schaeffer-Reiss C."/>
            <person name="Rompais M."/>
            <person name="Ayoub D."/>
            <person name="Lane L."/>
            <person name="Bairoch A."/>
            <person name="Van Dorsselaer A."/>
            <person name="Carapito C."/>
        </authorList>
    </citation>
    <scope>IDENTIFICATION BY MASS SPECTROMETRY [LARGE SCALE ANALYSIS]</scope>
</reference>
<reference key="13">
    <citation type="journal article" date="2023" name="Blood">
        <title>DOCK11 deficiency in patients with X-linked actinopathy and autoimmunity.</title>
        <authorList>
            <person name="Boussard C."/>
            <person name="Delage L."/>
            <person name="Gajardo T."/>
            <person name="Kauskot A."/>
            <person name="Batignes M."/>
            <person name="Goudin N."/>
            <person name="Stolzenberg M.C."/>
            <person name="Brunaud C."/>
            <person name="Panikulam P."/>
            <person name="Riller Q."/>
            <person name="Moya-Nilges M."/>
            <person name="Solarz J."/>
            <person name="Reperant C."/>
            <person name="Durel B."/>
            <person name="Bordet J.C."/>
            <person name="Pelle O."/>
            <person name="Lebreton C."/>
            <person name="Magerus A."/>
            <person name="Pirabakaran V."/>
            <person name="Vargas P."/>
            <person name="Dupichaud S."/>
            <person name="Jeanpierre M."/>
            <person name="Vinit A."/>
            <person name="Zarhrate M."/>
            <person name="Masson C."/>
            <person name="Aladjidi N."/>
            <person name="Arkwright P.D."/>
            <person name="Bader-Meunier B."/>
            <person name="Baron Joly S."/>
            <person name="Benadiba J."/>
            <person name="Bernard E."/>
            <person name="Berrebi D."/>
            <person name="Bodemer C."/>
            <person name="Castelle M."/>
            <person name="Charbit-Henrion F."/>
            <person name="Chbihi M."/>
            <person name="Debray A."/>
            <person name="Drabent P."/>
            <person name="Fraitag S."/>
            <person name="Hie M."/>
            <person name="Landman-Parker J."/>
            <person name="Lhermitte L."/>
            <person name="Moshous D."/>
            <person name="Rohrlich P."/>
            <person name="Ruemmele F."/>
            <person name="Welfringer-Morin A."/>
            <person name="Tusseau M."/>
            <person name="Belot A."/>
            <person name="Cerf-Bensussan N."/>
            <person name="Roelens M."/>
            <person name="Picard C."/>
            <person name="Neven B."/>
            <person name="Fischer A."/>
            <person name="Callebaut I."/>
            <person name="Menager M.M."/>
            <person name="Sepulveda F.E."/>
            <person name="Adam F."/>
            <person name="Rieux-Laucat F."/>
        </authorList>
    </citation>
    <scope>INVOLVEMENT IN ADMIDX</scope>
    <scope>VARIANTS ADMIDX SER-275; TYR-414; ARG-1298; ARG-1336; GLN-1366; SER-1706 AND CYS-1885</scope>
</reference>
<reference key="14">
    <citation type="journal article" date="2023" name="N. Engl. J. Med.">
        <title>Systemic Inflammation and Normocytic Anemia in DOCK11 Deficiency.</title>
        <authorList>
            <person name="Block J."/>
            <person name="Rashkova C."/>
            <person name="Castanon I."/>
            <person name="Zoghi S."/>
            <person name="Platon J."/>
            <person name="Ardy R.C."/>
            <person name="Fujiwara M."/>
            <person name="Chaves B."/>
            <person name="Schoppmeyer R."/>
            <person name="van der Made C.I."/>
            <person name="Jimenez Heredia R."/>
            <person name="Harms F.L."/>
            <person name="Alavi S."/>
            <person name="Alsina L."/>
            <person name="Sanchez Moreno P."/>
            <person name="Avila Polo R."/>
            <person name="Cabrera-Perez R."/>
            <person name="Kostel Bal S."/>
            <person name="Pfajfer L."/>
            <person name="Ransmayr B."/>
            <person name="Mautner A.K."/>
            <person name="Kondo R."/>
            <person name="Tinnacher A."/>
            <person name="Caldera M."/>
            <person name="Schuster M."/>
            <person name="Dominguez Conde C."/>
            <person name="Platzer R."/>
            <person name="Salzer E."/>
            <person name="Boyer T."/>
            <person name="Brunner H.G."/>
            <person name="Nooitgedagt-Frons J.E."/>
            <person name="Iglesias E."/>
            <person name="Deya-Martinez A."/>
            <person name="Camacho-Lovillo M."/>
            <person name="Menche J."/>
            <person name="Bock C."/>
            <person name="Huppa J.B."/>
            <person name="Pickl W.F."/>
            <person name="Distel M."/>
            <person name="Yoder J.A."/>
            <person name="Traver D."/>
            <person name="Engelhardt K.R."/>
            <person name="Linden T."/>
            <person name="Kager L."/>
            <person name="Hannich J.T."/>
            <person name="Hoischen A."/>
            <person name="Hambleton S."/>
            <person name="Illsinger S."/>
            <person name="Da Costa L."/>
            <person name="Kutsche K."/>
            <person name="Chavoshzadeh Z."/>
            <person name="van Buul J.D."/>
            <person name="Anton J."/>
            <person name="Calzada-Hernandez J."/>
            <person name="Neth O."/>
            <person name="Viaud J."/>
            <person name="Nishikimi A."/>
            <person name="Dupre L."/>
            <person name="Boztug K."/>
        </authorList>
    </citation>
    <scope>VARIANTS ADMIDX CYS-108 AND SER-1707</scope>
    <scope>CHARACTERIZATION OF VARIANTS ADMIDX CYS-108 AND SER-1707</scope>
    <scope>FUNCTION</scope>
</reference>
<accession>Q5JSL3</accession>
<accession>A6NMF0</accession>
<accession>Q66M66</accession>
<accession>Q6ZUJ5</accession>
<accession>Q86VU8</accession>
<accession>Q96MN3</accession>